<organism evidence="6">
    <name type="scientific">Entamoeba histolytica (strain ATCC 30459 / HM-1:IMSS / ABRM)</name>
    <dbReference type="NCBI Taxonomy" id="294381"/>
    <lineage>
        <taxon>Eukaryota</taxon>
        <taxon>Amoebozoa</taxon>
        <taxon>Evosea</taxon>
        <taxon>Archamoebae</taxon>
        <taxon>Mastigamoebida</taxon>
        <taxon>Entamoebidae</taxon>
        <taxon>Entamoeba</taxon>
    </lineage>
</organism>
<reference key="1">
    <citation type="journal article" date="1992" name="Arch. Med. Res.">
        <title>Primary structures of alcohol and aldehyde dehydrogenase genes of Entamoeba histolytica.</title>
        <authorList>
            <person name="Samuelson J."/>
            <person name="Zhang W.W."/>
            <person name="Kumar A."/>
            <person name="Descoteaux S."/>
            <person name="Shen P.S."/>
            <person name="Bailey G."/>
        </authorList>
    </citation>
    <scope>NUCLEOTIDE SEQUENCE</scope>
</reference>
<reference evidence="6" key="2">
    <citation type="journal article" date="2005" name="Nature">
        <title>The genome of the protist parasite Entamoeba histolytica.</title>
        <authorList>
            <person name="Loftus B.J."/>
            <person name="Anderson I."/>
            <person name="Davies R."/>
            <person name="Alsmark U.C."/>
            <person name="Samuelson J."/>
            <person name="Amedeo P."/>
            <person name="Roncaglia P."/>
            <person name="Berriman M."/>
            <person name="Hirt R.P."/>
            <person name="Mann B.J."/>
            <person name="Nozaki T."/>
            <person name="Suh B."/>
            <person name="Pop M."/>
            <person name="Duchene M."/>
            <person name="Ackers J."/>
            <person name="Tannich E."/>
            <person name="Leippe M."/>
            <person name="Hofer M."/>
            <person name="Bruchhaus I."/>
            <person name="Willhoeft U."/>
            <person name="Bhattacharya A."/>
            <person name="Chillingworth T."/>
            <person name="Churcher C.M."/>
            <person name="Hance Z."/>
            <person name="Harris B."/>
            <person name="Harris D."/>
            <person name="Jagels K."/>
            <person name="Moule S."/>
            <person name="Mungall K.L."/>
            <person name="Ormond D."/>
            <person name="Squares R."/>
            <person name="Whitehead S."/>
            <person name="Quail M.A."/>
            <person name="Rabbinowitsch E."/>
            <person name="Norbertczak H."/>
            <person name="Price C."/>
            <person name="Wang Z."/>
            <person name="Guillen N."/>
            <person name="Gilchrist C."/>
            <person name="Stroup S.E."/>
            <person name="Bhattacharya S."/>
            <person name="Lohia A."/>
            <person name="Foster P.G."/>
            <person name="Sicheritz-Ponten T."/>
            <person name="Weber C."/>
            <person name="Singh U."/>
            <person name="Mukherjee C."/>
            <person name="El-Sayed N.M.A."/>
            <person name="Petri W.A."/>
            <person name="Clark C.G."/>
            <person name="Embley T.M."/>
            <person name="Barrell B.G."/>
            <person name="Fraser C.M."/>
            <person name="Hall N."/>
        </authorList>
    </citation>
    <scope>NUCLEOTIDE SEQUENCE [LARGE SCALE GENOMIC DNA]</scope>
    <source>
        <strain evidence="6">ATCC 30459 / HM-1:IMSS / ABRM</strain>
    </source>
</reference>
<feature type="chain" id="PRO_0000056432" description="Aldehyde dehydrogenase 1">
    <location>
        <begin position="1"/>
        <end position="529"/>
    </location>
</feature>
<feature type="active site" evidence="3">
    <location>
        <position position="273"/>
    </location>
</feature>
<feature type="active site" evidence="3">
    <location>
        <position position="307"/>
    </location>
</feature>
<feature type="binding site" evidence="1">
    <location>
        <begin position="251"/>
        <end position="256"/>
    </location>
    <ligand>
        <name>NAD(+)</name>
        <dbReference type="ChEBI" id="CHEBI:57540"/>
    </ligand>
</feature>
<accession>P30840</accession>
<accession>A0A175JRH3</accession>
<accession>C4M4G8</accession>
<proteinExistence type="inferred from homology"/>
<evidence type="ECO:0000250" key="1"/>
<evidence type="ECO:0000250" key="2">
    <source>
        <dbReference type="UniProtKB" id="P51648"/>
    </source>
</evidence>
<evidence type="ECO:0000255" key="3">
    <source>
        <dbReference type="PROSITE-ProRule" id="PRU10007"/>
    </source>
</evidence>
<evidence type="ECO:0000303" key="4">
    <source>
    </source>
</evidence>
<evidence type="ECO:0000305" key="5"/>
<evidence type="ECO:0000312" key="6">
    <source>
        <dbReference type="EMBL" id="EAL51162.1"/>
    </source>
</evidence>
<sequence>MEAYVLSLSDVLFNILFIGVCILSVLLLISHALKYIIGDSKEKKLFNQRLEQIKNQQPLEPTKYQDIQTICKTLKESYSTNALRHLDARKEVLYCLYRMVLDNKQAISNAIREDLHRDVGMCVAEVNSVIHEINFLRKNLNKYLKRKQVPTVCAQLFGKSFVEREPYGCVCVISPWNFPANLSLIPCAGALACGNTVFLKMSKYSMATSKLIAELCDKYIPSEYLRCEYLTGREAIQECCSASFDYYFFTGSTYVGKLINQAAAEKMVPATLELGGKNPAIVDKSVNLKVAAKRIAWAKSINAGQICVCVDHVFVPRSIKNEFCEAVKNSFIKFFGEDQKKSEDFGRIITKSAAKKMKEIIDQSDVYYGGEVDIENKYVQPTILQNVKIDDLCMKEEIFGPILPVIEYDTLDEVFEMVKQHPNPLACYVFTEDNDMFEHVIANINSGAIYNNDSIVHLLNPNLPFGGNCQSGIGCYHGKYTFDTFSRPRAVCNGHTSFDLSLKDWPFTSFQSWAVDRMAASEIPVVSYL</sequence>
<protein>
    <recommendedName>
        <fullName evidence="4">Aldehyde dehydrogenase 1</fullName>
        <ecNumber evidence="2">1.2.1.3</ecNumber>
    </recommendedName>
</protein>
<name>ALDH1_ENTH1</name>
<dbReference type="EC" id="1.2.1.3" evidence="2"/>
<dbReference type="EMBL" id="L05667">
    <property type="protein sequence ID" value="AAA19741.1"/>
    <property type="molecule type" value="Unassigned_DNA"/>
</dbReference>
<dbReference type="EMBL" id="DS571259">
    <property type="protein sequence ID" value="EAL51162.1"/>
    <property type="molecule type" value="Genomic_DNA"/>
</dbReference>
<dbReference type="RefSeq" id="XP_656548.1">
    <property type="nucleotide sequence ID" value="XM_651456.1"/>
</dbReference>
<dbReference type="SMR" id="P30840"/>
<dbReference type="STRING" id="5759.C4M4G8"/>
<dbReference type="EnsemblProtists" id="GAT96267">
    <property type="protein sequence ID" value="GAT96267"/>
    <property type="gene ID" value="CL6EHI_042140"/>
</dbReference>
<dbReference type="EnsemblProtists" id="rna_EHI_042140-1">
    <property type="protein sequence ID" value="rna_EHI_042140-1"/>
    <property type="gene ID" value="EHI_042140"/>
</dbReference>
<dbReference type="GeneID" id="3410868"/>
<dbReference type="KEGG" id="ehi:EHI_042140"/>
<dbReference type="VEuPathDB" id="AmoebaDB:EHI5A_095430"/>
<dbReference type="VEuPathDB" id="AmoebaDB:EHI7A_063350"/>
<dbReference type="VEuPathDB" id="AmoebaDB:EHI8A_066500"/>
<dbReference type="VEuPathDB" id="AmoebaDB:EHI_042140"/>
<dbReference type="VEuPathDB" id="AmoebaDB:KM1_122750"/>
<dbReference type="eggNOG" id="KOG2456">
    <property type="taxonomic scope" value="Eukaryota"/>
</dbReference>
<dbReference type="HOGENOM" id="CLU_005391_3_1_1"/>
<dbReference type="OMA" id="EIDWCKQ"/>
<dbReference type="OrthoDB" id="440325at2759"/>
<dbReference type="Proteomes" id="UP000001926">
    <property type="component" value="Partially assembled WGS sequence"/>
</dbReference>
<dbReference type="GO" id="GO:0005737">
    <property type="term" value="C:cytoplasm"/>
    <property type="evidence" value="ECO:0000318"/>
    <property type="project" value="GO_Central"/>
</dbReference>
<dbReference type="GO" id="GO:0004029">
    <property type="term" value="F:aldehyde dehydrogenase (NAD+) activity"/>
    <property type="evidence" value="ECO:0000318"/>
    <property type="project" value="GO_Central"/>
</dbReference>
<dbReference type="GO" id="GO:0006081">
    <property type="term" value="P:aldehyde metabolic process"/>
    <property type="evidence" value="ECO:0000318"/>
    <property type="project" value="GO_Central"/>
</dbReference>
<dbReference type="CDD" id="cd07087">
    <property type="entry name" value="ALDH_F3-13-14_CALDH-like"/>
    <property type="match status" value="1"/>
</dbReference>
<dbReference type="FunFam" id="3.40.309.10:FF:000046">
    <property type="entry name" value="Aldehyde dehydrogenase"/>
    <property type="match status" value="1"/>
</dbReference>
<dbReference type="FunFam" id="3.40.605.10:FF:000004">
    <property type="entry name" value="Aldehyde dehydrogenase"/>
    <property type="match status" value="1"/>
</dbReference>
<dbReference type="Gene3D" id="3.40.605.10">
    <property type="entry name" value="Aldehyde Dehydrogenase, Chain A, domain 1"/>
    <property type="match status" value="1"/>
</dbReference>
<dbReference type="Gene3D" id="3.40.309.10">
    <property type="entry name" value="Aldehyde Dehydrogenase, Chain A, domain 2"/>
    <property type="match status" value="1"/>
</dbReference>
<dbReference type="InterPro" id="IPR016161">
    <property type="entry name" value="Ald_DH/histidinol_DH"/>
</dbReference>
<dbReference type="InterPro" id="IPR016163">
    <property type="entry name" value="Ald_DH_C"/>
</dbReference>
<dbReference type="InterPro" id="IPR029510">
    <property type="entry name" value="Ald_DH_CS_GLU"/>
</dbReference>
<dbReference type="InterPro" id="IPR016162">
    <property type="entry name" value="Ald_DH_N"/>
</dbReference>
<dbReference type="InterPro" id="IPR015590">
    <property type="entry name" value="Aldehyde_DH_dom"/>
</dbReference>
<dbReference type="InterPro" id="IPR012394">
    <property type="entry name" value="Aldehyde_DH_NAD(P)"/>
</dbReference>
<dbReference type="PANTHER" id="PTHR43570">
    <property type="entry name" value="ALDEHYDE DEHYDROGENASE"/>
    <property type="match status" value="1"/>
</dbReference>
<dbReference type="PANTHER" id="PTHR43570:SF16">
    <property type="entry name" value="ALDEHYDE DEHYDROGENASE TYPE III, ISOFORM Q"/>
    <property type="match status" value="1"/>
</dbReference>
<dbReference type="Pfam" id="PF00171">
    <property type="entry name" value="Aldedh"/>
    <property type="match status" value="1"/>
</dbReference>
<dbReference type="PIRSF" id="PIRSF036492">
    <property type="entry name" value="ALDH"/>
    <property type="match status" value="1"/>
</dbReference>
<dbReference type="SUPFAM" id="SSF53720">
    <property type="entry name" value="ALDH-like"/>
    <property type="match status" value="1"/>
</dbReference>
<dbReference type="PROSITE" id="PS00687">
    <property type="entry name" value="ALDEHYDE_DEHYDR_GLU"/>
    <property type="match status" value="1"/>
</dbReference>
<gene>
    <name evidence="4" type="primary">ALDH1</name>
    <name evidence="6" type="ORF">EHI_042140</name>
</gene>
<comment type="catalytic activity">
    <reaction evidence="2">
        <text>an aldehyde + NAD(+) + H2O = a carboxylate + NADH + 2 H(+)</text>
        <dbReference type="Rhea" id="RHEA:16185"/>
        <dbReference type="ChEBI" id="CHEBI:15377"/>
        <dbReference type="ChEBI" id="CHEBI:15378"/>
        <dbReference type="ChEBI" id="CHEBI:17478"/>
        <dbReference type="ChEBI" id="CHEBI:29067"/>
        <dbReference type="ChEBI" id="CHEBI:57540"/>
        <dbReference type="ChEBI" id="CHEBI:57945"/>
        <dbReference type="EC" id="1.2.1.3"/>
    </reaction>
</comment>
<comment type="similarity">
    <text evidence="5">Belongs to the aldehyde dehydrogenase family.</text>
</comment>
<keyword id="KW-0520">NAD</keyword>
<keyword id="KW-0560">Oxidoreductase</keyword>
<keyword id="KW-1185">Reference proteome</keyword>